<dbReference type="EMBL" id="FM177140">
    <property type="protein sequence ID" value="CAQ67725.1"/>
    <property type="molecule type" value="Genomic_DNA"/>
</dbReference>
<dbReference type="SMR" id="B3WAK6"/>
<dbReference type="KEGG" id="lcb:LCABL_26590"/>
<dbReference type="HOGENOM" id="CLU_093315_2_0_9"/>
<dbReference type="GO" id="GO:1990904">
    <property type="term" value="C:ribonucleoprotein complex"/>
    <property type="evidence" value="ECO:0007669"/>
    <property type="project" value="UniProtKB-KW"/>
</dbReference>
<dbReference type="GO" id="GO:0005840">
    <property type="term" value="C:ribosome"/>
    <property type="evidence" value="ECO:0007669"/>
    <property type="project" value="UniProtKB-KW"/>
</dbReference>
<dbReference type="GO" id="GO:0019843">
    <property type="term" value="F:rRNA binding"/>
    <property type="evidence" value="ECO:0007669"/>
    <property type="project" value="UniProtKB-UniRule"/>
</dbReference>
<dbReference type="GO" id="GO:0003735">
    <property type="term" value="F:structural constituent of ribosome"/>
    <property type="evidence" value="ECO:0007669"/>
    <property type="project" value="InterPro"/>
</dbReference>
<dbReference type="GO" id="GO:0006412">
    <property type="term" value="P:translation"/>
    <property type="evidence" value="ECO:0007669"/>
    <property type="project" value="UniProtKB-UniRule"/>
</dbReference>
<dbReference type="CDD" id="cd06089">
    <property type="entry name" value="KOW_RPL26"/>
    <property type="match status" value="1"/>
</dbReference>
<dbReference type="FunFam" id="2.30.30.30:FF:000004">
    <property type="entry name" value="50S ribosomal protein L24"/>
    <property type="match status" value="1"/>
</dbReference>
<dbReference type="Gene3D" id="2.30.30.30">
    <property type="match status" value="1"/>
</dbReference>
<dbReference type="HAMAP" id="MF_01326_B">
    <property type="entry name" value="Ribosomal_uL24_B"/>
    <property type="match status" value="1"/>
</dbReference>
<dbReference type="InterPro" id="IPR005824">
    <property type="entry name" value="KOW"/>
</dbReference>
<dbReference type="InterPro" id="IPR014722">
    <property type="entry name" value="Rib_uL2_dom2"/>
</dbReference>
<dbReference type="InterPro" id="IPR003256">
    <property type="entry name" value="Ribosomal_uL24"/>
</dbReference>
<dbReference type="InterPro" id="IPR005825">
    <property type="entry name" value="Ribosomal_uL24_CS"/>
</dbReference>
<dbReference type="InterPro" id="IPR041988">
    <property type="entry name" value="Ribosomal_uL24_KOW"/>
</dbReference>
<dbReference type="InterPro" id="IPR008991">
    <property type="entry name" value="Translation_prot_SH3-like_sf"/>
</dbReference>
<dbReference type="NCBIfam" id="TIGR01079">
    <property type="entry name" value="rplX_bact"/>
    <property type="match status" value="1"/>
</dbReference>
<dbReference type="PANTHER" id="PTHR12903">
    <property type="entry name" value="MITOCHONDRIAL RIBOSOMAL PROTEIN L24"/>
    <property type="match status" value="1"/>
</dbReference>
<dbReference type="Pfam" id="PF00467">
    <property type="entry name" value="KOW"/>
    <property type="match status" value="1"/>
</dbReference>
<dbReference type="Pfam" id="PF17136">
    <property type="entry name" value="ribosomal_L24"/>
    <property type="match status" value="1"/>
</dbReference>
<dbReference type="SMART" id="SM00739">
    <property type="entry name" value="KOW"/>
    <property type="match status" value="1"/>
</dbReference>
<dbReference type="SUPFAM" id="SSF50104">
    <property type="entry name" value="Translation proteins SH3-like domain"/>
    <property type="match status" value="1"/>
</dbReference>
<dbReference type="PROSITE" id="PS01108">
    <property type="entry name" value="RIBOSOMAL_L24"/>
    <property type="match status" value="1"/>
</dbReference>
<keyword id="KW-0687">Ribonucleoprotein</keyword>
<keyword id="KW-0689">Ribosomal protein</keyword>
<keyword id="KW-0694">RNA-binding</keyword>
<keyword id="KW-0699">rRNA-binding</keyword>
<evidence type="ECO:0000255" key="1">
    <source>
        <dbReference type="HAMAP-Rule" id="MF_01326"/>
    </source>
</evidence>
<evidence type="ECO:0000305" key="2"/>
<sequence length="103" mass="11230">MKFKTGDKVRVMRGKDAGKEGQITKVLKDADKVVVEGINMIKKHQKPNNANPQGGIIDKEAPIHVSNVMLLDPDTNKPTRIGSEVKDGNKVRIAKKSGTAIDK</sequence>
<accession>B3WAK6</accession>
<gene>
    <name evidence="1" type="primary">rplX</name>
    <name type="ordered locus">LCABL_26590</name>
</gene>
<feature type="chain" id="PRO_1000142007" description="Large ribosomal subunit protein uL24">
    <location>
        <begin position="1"/>
        <end position="103"/>
    </location>
</feature>
<proteinExistence type="inferred from homology"/>
<comment type="function">
    <text evidence="1">One of two assembly initiator proteins, it binds directly to the 5'-end of the 23S rRNA, where it nucleates assembly of the 50S subunit.</text>
</comment>
<comment type="function">
    <text evidence="1">One of the proteins that surrounds the polypeptide exit tunnel on the outside of the subunit.</text>
</comment>
<comment type="subunit">
    <text evidence="1">Part of the 50S ribosomal subunit.</text>
</comment>
<comment type="similarity">
    <text evidence="1">Belongs to the universal ribosomal protein uL24 family.</text>
</comment>
<name>RL24_LACCB</name>
<organism>
    <name type="scientific">Lacticaseibacillus casei (strain BL23)</name>
    <name type="common">Lactobacillus casei</name>
    <dbReference type="NCBI Taxonomy" id="543734"/>
    <lineage>
        <taxon>Bacteria</taxon>
        <taxon>Bacillati</taxon>
        <taxon>Bacillota</taxon>
        <taxon>Bacilli</taxon>
        <taxon>Lactobacillales</taxon>
        <taxon>Lactobacillaceae</taxon>
        <taxon>Lacticaseibacillus</taxon>
    </lineage>
</organism>
<reference key="1">
    <citation type="submission" date="2008-06" db="EMBL/GenBank/DDBJ databases">
        <title>Lactobacillus casei BL23 complete genome sequence.</title>
        <authorList>
            <person name="Maze A."/>
            <person name="Boel G."/>
            <person name="Bourand A."/>
            <person name="Loux V."/>
            <person name="Gibrat J.F."/>
            <person name="Zuniga M."/>
            <person name="Hartke A."/>
            <person name="Deutscher J."/>
        </authorList>
    </citation>
    <scope>NUCLEOTIDE SEQUENCE [LARGE SCALE GENOMIC DNA]</scope>
    <source>
        <strain>BL23</strain>
    </source>
</reference>
<protein>
    <recommendedName>
        <fullName evidence="1">Large ribosomal subunit protein uL24</fullName>
    </recommendedName>
    <alternativeName>
        <fullName evidence="2">50S ribosomal protein L24</fullName>
    </alternativeName>
</protein>